<gene>
    <name evidence="1" type="primary">tyrS</name>
    <name type="ordered locus">CTC_02446</name>
</gene>
<name>SYY_CLOTE</name>
<keyword id="KW-0030">Aminoacyl-tRNA synthetase</keyword>
<keyword id="KW-0067">ATP-binding</keyword>
<keyword id="KW-0963">Cytoplasm</keyword>
<keyword id="KW-0436">Ligase</keyword>
<keyword id="KW-0547">Nucleotide-binding</keyword>
<keyword id="KW-0648">Protein biosynthesis</keyword>
<keyword id="KW-1185">Reference proteome</keyword>
<keyword id="KW-0694">RNA-binding</keyword>
<evidence type="ECO:0000255" key="1">
    <source>
        <dbReference type="HAMAP-Rule" id="MF_02006"/>
    </source>
</evidence>
<evidence type="ECO:0000305" key="2"/>
<sequence>MGNNVFDVLKERGYIKQTTHEEEIRDLINKDKITFYIGFDPTADSLHIGHFLPLMMMAHMQKAGHRPIALVGGGTVRIGDPSGKSEMRKMLSKEAIDKNVSSIKSQISRFIDFSDDKAILVDNADWLLNLNYLEFIREIGVHFSVNKMLTAECFKQRLEKGLSFLEFNYMLMQAYDFLCLNRKYGCVMELGGDDQWSNMLAGTDLIRREESKSAYAMTCTLLTNSEGNKMGKTVNGALWLDKDKTSPYEFYQYWRNVDDADVEKCLALLTFLPMDEVRRLAALEGNKINEAKKVLAYEVTKLIHGEDEAKKAEEASEALFGAGKDMSNVPTVNISKDDLGKGILDILVETKILPSKGEARRLIQQGGLSINEEKVTDINMAVTEDLFEENSIIIRRGKKSYNRIVIE</sequence>
<protein>
    <recommendedName>
        <fullName evidence="1">Tyrosine--tRNA ligase</fullName>
        <ecNumber evidence="1">6.1.1.1</ecNumber>
    </recommendedName>
    <alternativeName>
        <fullName evidence="1">Tyrosyl-tRNA synthetase</fullName>
        <shortName evidence="1">TyrRS</shortName>
    </alternativeName>
</protein>
<dbReference type="EC" id="6.1.1.1" evidence="1"/>
<dbReference type="EMBL" id="AE015927">
    <property type="protein sequence ID" value="AAO36912.1"/>
    <property type="status" value="ALT_INIT"/>
    <property type="molecule type" value="Genomic_DNA"/>
</dbReference>
<dbReference type="RefSeq" id="WP_035124781.1">
    <property type="nucleotide sequence ID" value="NC_004557.1"/>
</dbReference>
<dbReference type="SMR" id="Q891D3"/>
<dbReference type="STRING" id="212717.CTC_02446"/>
<dbReference type="GeneID" id="24252673"/>
<dbReference type="KEGG" id="ctc:CTC_02446"/>
<dbReference type="HOGENOM" id="CLU_024003_0_3_9"/>
<dbReference type="OrthoDB" id="9804243at2"/>
<dbReference type="Proteomes" id="UP000001412">
    <property type="component" value="Chromosome"/>
</dbReference>
<dbReference type="GO" id="GO:0005829">
    <property type="term" value="C:cytosol"/>
    <property type="evidence" value="ECO:0007669"/>
    <property type="project" value="TreeGrafter"/>
</dbReference>
<dbReference type="GO" id="GO:0005524">
    <property type="term" value="F:ATP binding"/>
    <property type="evidence" value="ECO:0007669"/>
    <property type="project" value="UniProtKB-UniRule"/>
</dbReference>
<dbReference type="GO" id="GO:0003723">
    <property type="term" value="F:RNA binding"/>
    <property type="evidence" value="ECO:0007669"/>
    <property type="project" value="UniProtKB-KW"/>
</dbReference>
<dbReference type="GO" id="GO:0004831">
    <property type="term" value="F:tyrosine-tRNA ligase activity"/>
    <property type="evidence" value="ECO:0007669"/>
    <property type="project" value="UniProtKB-UniRule"/>
</dbReference>
<dbReference type="GO" id="GO:0006437">
    <property type="term" value="P:tyrosyl-tRNA aminoacylation"/>
    <property type="evidence" value="ECO:0007669"/>
    <property type="project" value="UniProtKB-UniRule"/>
</dbReference>
<dbReference type="CDD" id="cd00165">
    <property type="entry name" value="S4"/>
    <property type="match status" value="1"/>
</dbReference>
<dbReference type="CDD" id="cd00805">
    <property type="entry name" value="TyrRS_core"/>
    <property type="match status" value="1"/>
</dbReference>
<dbReference type="FunFam" id="1.10.240.10:FF:000001">
    <property type="entry name" value="Tyrosine--tRNA ligase"/>
    <property type="match status" value="1"/>
</dbReference>
<dbReference type="FunFam" id="3.10.290.10:FF:000022">
    <property type="entry name" value="Tyrosine--tRNA ligase"/>
    <property type="match status" value="1"/>
</dbReference>
<dbReference type="FunFam" id="3.40.50.620:FF:000008">
    <property type="entry name" value="Tyrosine--tRNA ligase"/>
    <property type="match status" value="1"/>
</dbReference>
<dbReference type="Gene3D" id="3.40.50.620">
    <property type="entry name" value="HUPs"/>
    <property type="match status" value="1"/>
</dbReference>
<dbReference type="Gene3D" id="3.10.290.10">
    <property type="entry name" value="RNA-binding S4 domain"/>
    <property type="match status" value="1"/>
</dbReference>
<dbReference type="Gene3D" id="1.10.240.10">
    <property type="entry name" value="Tyrosyl-Transfer RNA Synthetase"/>
    <property type="match status" value="1"/>
</dbReference>
<dbReference type="HAMAP" id="MF_02006">
    <property type="entry name" value="Tyr_tRNA_synth_type1"/>
    <property type="match status" value="1"/>
</dbReference>
<dbReference type="InterPro" id="IPR001412">
    <property type="entry name" value="aa-tRNA-synth_I_CS"/>
</dbReference>
<dbReference type="InterPro" id="IPR002305">
    <property type="entry name" value="aa-tRNA-synth_Ic"/>
</dbReference>
<dbReference type="InterPro" id="IPR014729">
    <property type="entry name" value="Rossmann-like_a/b/a_fold"/>
</dbReference>
<dbReference type="InterPro" id="IPR002942">
    <property type="entry name" value="S4_RNA-bd"/>
</dbReference>
<dbReference type="InterPro" id="IPR036986">
    <property type="entry name" value="S4_RNA-bd_sf"/>
</dbReference>
<dbReference type="InterPro" id="IPR054608">
    <property type="entry name" value="SYY-like_C"/>
</dbReference>
<dbReference type="InterPro" id="IPR002307">
    <property type="entry name" value="Tyr-tRNA-ligase"/>
</dbReference>
<dbReference type="InterPro" id="IPR024088">
    <property type="entry name" value="Tyr-tRNA-ligase_bac-type"/>
</dbReference>
<dbReference type="InterPro" id="IPR024107">
    <property type="entry name" value="Tyr-tRNA-ligase_bac_1"/>
</dbReference>
<dbReference type="NCBIfam" id="TIGR00234">
    <property type="entry name" value="tyrS"/>
    <property type="match status" value="1"/>
</dbReference>
<dbReference type="PANTHER" id="PTHR11766:SF0">
    <property type="entry name" value="TYROSINE--TRNA LIGASE, MITOCHONDRIAL"/>
    <property type="match status" value="1"/>
</dbReference>
<dbReference type="PANTHER" id="PTHR11766">
    <property type="entry name" value="TYROSYL-TRNA SYNTHETASE"/>
    <property type="match status" value="1"/>
</dbReference>
<dbReference type="Pfam" id="PF22421">
    <property type="entry name" value="SYY_C-terminal"/>
    <property type="match status" value="1"/>
</dbReference>
<dbReference type="Pfam" id="PF00579">
    <property type="entry name" value="tRNA-synt_1b"/>
    <property type="match status" value="1"/>
</dbReference>
<dbReference type="PRINTS" id="PR01040">
    <property type="entry name" value="TRNASYNTHTYR"/>
</dbReference>
<dbReference type="SMART" id="SM00363">
    <property type="entry name" value="S4"/>
    <property type="match status" value="1"/>
</dbReference>
<dbReference type="SUPFAM" id="SSF55174">
    <property type="entry name" value="Alpha-L RNA-binding motif"/>
    <property type="match status" value="1"/>
</dbReference>
<dbReference type="SUPFAM" id="SSF52374">
    <property type="entry name" value="Nucleotidylyl transferase"/>
    <property type="match status" value="1"/>
</dbReference>
<dbReference type="PROSITE" id="PS00178">
    <property type="entry name" value="AA_TRNA_LIGASE_I"/>
    <property type="match status" value="1"/>
</dbReference>
<dbReference type="PROSITE" id="PS50889">
    <property type="entry name" value="S4"/>
    <property type="match status" value="1"/>
</dbReference>
<proteinExistence type="inferred from homology"/>
<reference key="1">
    <citation type="journal article" date="2003" name="Proc. Natl. Acad. Sci. U.S.A.">
        <title>The genome sequence of Clostridium tetani, the causative agent of tetanus disease.</title>
        <authorList>
            <person name="Brueggemann H."/>
            <person name="Baeumer S."/>
            <person name="Fricke W.F."/>
            <person name="Wiezer A."/>
            <person name="Liesegang H."/>
            <person name="Decker I."/>
            <person name="Herzberg C."/>
            <person name="Martinez-Arias R."/>
            <person name="Merkl R."/>
            <person name="Henne A."/>
            <person name="Gottschalk G."/>
        </authorList>
    </citation>
    <scope>NUCLEOTIDE SEQUENCE [LARGE SCALE GENOMIC DNA]</scope>
    <source>
        <strain>Massachusetts / E88</strain>
    </source>
</reference>
<accession>Q891D3</accession>
<feature type="chain" id="PRO_0000234699" description="Tyrosine--tRNA ligase">
    <location>
        <begin position="1"/>
        <end position="407"/>
    </location>
</feature>
<feature type="domain" description="S4 RNA-binding" evidence="1">
    <location>
        <begin position="341"/>
        <end position="407"/>
    </location>
</feature>
<feature type="short sequence motif" description="'HIGH' region">
    <location>
        <begin position="41"/>
        <end position="50"/>
    </location>
</feature>
<feature type="short sequence motif" description="'KMSKS' region">
    <location>
        <begin position="229"/>
        <end position="233"/>
    </location>
</feature>
<feature type="binding site" evidence="1">
    <location>
        <position position="36"/>
    </location>
    <ligand>
        <name>L-tyrosine</name>
        <dbReference type="ChEBI" id="CHEBI:58315"/>
    </ligand>
</feature>
<feature type="binding site" evidence="1">
    <location>
        <position position="169"/>
    </location>
    <ligand>
        <name>L-tyrosine</name>
        <dbReference type="ChEBI" id="CHEBI:58315"/>
    </ligand>
</feature>
<feature type="binding site" evidence="1">
    <location>
        <position position="173"/>
    </location>
    <ligand>
        <name>L-tyrosine</name>
        <dbReference type="ChEBI" id="CHEBI:58315"/>
    </ligand>
</feature>
<feature type="binding site" evidence="1">
    <location>
        <position position="232"/>
    </location>
    <ligand>
        <name>ATP</name>
        <dbReference type="ChEBI" id="CHEBI:30616"/>
    </ligand>
</feature>
<organism>
    <name type="scientific">Clostridium tetani (strain Massachusetts / E88)</name>
    <dbReference type="NCBI Taxonomy" id="212717"/>
    <lineage>
        <taxon>Bacteria</taxon>
        <taxon>Bacillati</taxon>
        <taxon>Bacillota</taxon>
        <taxon>Clostridia</taxon>
        <taxon>Eubacteriales</taxon>
        <taxon>Clostridiaceae</taxon>
        <taxon>Clostridium</taxon>
    </lineage>
</organism>
<comment type="function">
    <text evidence="1">Catalyzes the attachment of tyrosine to tRNA(Tyr) in a two-step reaction: tyrosine is first activated by ATP to form Tyr-AMP and then transferred to the acceptor end of tRNA(Tyr).</text>
</comment>
<comment type="catalytic activity">
    <reaction evidence="1">
        <text>tRNA(Tyr) + L-tyrosine + ATP = L-tyrosyl-tRNA(Tyr) + AMP + diphosphate + H(+)</text>
        <dbReference type="Rhea" id="RHEA:10220"/>
        <dbReference type="Rhea" id="RHEA-COMP:9706"/>
        <dbReference type="Rhea" id="RHEA-COMP:9707"/>
        <dbReference type="ChEBI" id="CHEBI:15378"/>
        <dbReference type="ChEBI" id="CHEBI:30616"/>
        <dbReference type="ChEBI" id="CHEBI:33019"/>
        <dbReference type="ChEBI" id="CHEBI:58315"/>
        <dbReference type="ChEBI" id="CHEBI:78442"/>
        <dbReference type="ChEBI" id="CHEBI:78536"/>
        <dbReference type="ChEBI" id="CHEBI:456215"/>
        <dbReference type="EC" id="6.1.1.1"/>
    </reaction>
</comment>
<comment type="subunit">
    <text evidence="1">Homodimer.</text>
</comment>
<comment type="subcellular location">
    <subcellularLocation>
        <location evidence="1">Cytoplasm</location>
    </subcellularLocation>
</comment>
<comment type="similarity">
    <text evidence="1">Belongs to the class-I aminoacyl-tRNA synthetase family. TyrS type 1 subfamily.</text>
</comment>
<comment type="sequence caution" evidence="2">
    <conflict type="erroneous initiation">
        <sequence resource="EMBL-CDS" id="AAO36912"/>
    </conflict>
</comment>